<protein>
    <recommendedName>
        <fullName evidence="1">N-acetylmuramic acid 6-phosphate etherase</fullName>
        <shortName evidence="1">MurNAc-6-P etherase</shortName>
        <ecNumber evidence="1">4.2.1.126</ecNumber>
    </recommendedName>
    <alternativeName>
        <fullName evidence="1">N-acetylmuramic acid 6-phosphate hydrolase</fullName>
    </alternativeName>
    <alternativeName>
        <fullName evidence="1">N-acetylmuramic acid 6-phosphate lyase</fullName>
    </alternativeName>
</protein>
<accession>A7MTC9</accession>
<proteinExistence type="inferred from homology"/>
<sequence length="308" mass="32689">MTNDALIAALAHLVSEGRNPDTMDIDLLPSLDIVQRLNQQDKLVPLAVEKVLPEIALAVDKITDAFKVGGRLVYMGAGTSGRLGVLDASECPPTFGVSDKMVVGLIAGGPEAILKAKEGAEDSPVLGEQDLKDIKFTNLDVVVGIAASGRTPYVIGGLEYANEIGATTIALSCNPDSPIADIADVAISPVVGPEALTGSTRLKSGTAQKLVLNMLTTASMIRLGKSYQNLMVDVKATNNKLVARAARIVMQATDCSKEQATEVLKQTDYEVKLAILMILTDLDIESARAHLHHQDGFLRKAVESHQPK</sequence>
<gene>
    <name evidence="1" type="primary">murQ</name>
    <name type="ordered locus">VIBHAR_00989</name>
</gene>
<reference key="1">
    <citation type="submission" date="2007-08" db="EMBL/GenBank/DDBJ databases">
        <authorList>
            <consortium name="The Vibrio harveyi Genome Sequencing Project"/>
            <person name="Bassler B."/>
            <person name="Clifton S.W."/>
            <person name="Fulton L."/>
            <person name="Delehaunty K."/>
            <person name="Fronick C."/>
            <person name="Harrison M."/>
            <person name="Markivic C."/>
            <person name="Fulton R."/>
            <person name="Tin-Wollam A.-M."/>
            <person name="Shah N."/>
            <person name="Pepin K."/>
            <person name="Nash W."/>
            <person name="Thiruvilangam P."/>
            <person name="Bhonagiri V."/>
            <person name="Waters C."/>
            <person name="Tu K.C."/>
            <person name="Irgon J."/>
            <person name="Wilson R.K."/>
        </authorList>
    </citation>
    <scope>NUCLEOTIDE SEQUENCE [LARGE SCALE GENOMIC DNA]</scope>
    <source>
        <strain>ATCC BAA-1116 / BB120</strain>
    </source>
</reference>
<keyword id="KW-0119">Carbohydrate metabolism</keyword>
<keyword id="KW-0456">Lyase</keyword>
<name>MURQ_VIBC1</name>
<feature type="chain" id="PRO_1000009134" description="N-acetylmuramic acid 6-phosphate etherase">
    <location>
        <begin position="1"/>
        <end position="308"/>
    </location>
</feature>
<feature type="domain" description="SIS" evidence="1">
    <location>
        <begin position="62"/>
        <end position="225"/>
    </location>
</feature>
<feature type="active site" description="Proton donor" evidence="1">
    <location>
        <position position="90"/>
    </location>
</feature>
<feature type="active site" evidence="1">
    <location>
        <position position="121"/>
    </location>
</feature>
<dbReference type="EC" id="4.2.1.126" evidence="1"/>
<dbReference type="EMBL" id="CP000789">
    <property type="protein sequence ID" value="ABU69988.1"/>
    <property type="molecule type" value="Genomic_DNA"/>
</dbReference>
<dbReference type="RefSeq" id="WP_012127050.1">
    <property type="nucleotide sequence ID" value="NC_022269.1"/>
</dbReference>
<dbReference type="SMR" id="A7MTC9"/>
<dbReference type="KEGG" id="vha:VIBHAR_00989"/>
<dbReference type="PATRIC" id="fig|338187.25.peg.1632"/>
<dbReference type="UniPathway" id="UPA00342"/>
<dbReference type="UniPathway" id="UPA00343"/>
<dbReference type="UniPathway" id="UPA00544"/>
<dbReference type="Proteomes" id="UP000008152">
    <property type="component" value="Chromosome I"/>
</dbReference>
<dbReference type="GO" id="GO:0097367">
    <property type="term" value="F:carbohydrate derivative binding"/>
    <property type="evidence" value="ECO:0007669"/>
    <property type="project" value="InterPro"/>
</dbReference>
<dbReference type="GO" id="GO:0016835">
    <property type="term" value="F:carbon-oxygen lyase activity"/>
    <property type="evidence" value="ECO:0007669"/>
    <property type="project" value="UniProtKB-UniRule"/>
</dbReference>
<dbReference type="GO" id="GO:0016803">
    <property type="term" value="F:ether hydrolase activity"/>
    <property type="evidence" value="ECO:0007669"/>
    <property type="project" value="TreeGrafter"/>
</dbReference>
<dbReference type="GO" id="GO:0097175">
    <property type="term" value="P:1,6-anhydro-N-acetyl-beta-muramic acid catabolic process"/>
    <property type="evidence" value="ECO:0007669"/>
    <property type="project" value="UniProtKB-UniRule"/>
</dbReference>
<dbReference type="GO" id="GO:0046348">
    <property type="term" value="P:amino sugar catabolic process"/>
    <property type="evidence" value="ECO:0007669"/>
    <property type="project" value="InterPro"/>
</dbReference>
<dbReference type="GO" id="GO:0097173">
    <property type="term" value="P:N-acetylmuramic acid catabolic process"/>
    <property type="evidence" value="ECO:0007669"/>
    <property type="project" value="UniProtKB-UniPathway"/>
</dbReference>
<dbReference type="GO" id="GO:0009254">
    <property type="term" value="P:peptidoglycan turnover"/>
    <property type="evidence" value="ECO:0007669"/>
    <property type="project" value="UniProtKB-UniRule"/>
</dbReference>
<dbReference type="CDD" id="cd05007">
    <property type="entry name" value="SIS_Etherase"/>
    <property type="match status" value="1"/>
</dbReference>
<dbReference type="FunFam" id="1.10.8.1080:FF:000001">
    <property type="entry name" value="N-acetylmuramic acid 6-phosphate etherase"/>
    <property type="match status" value="1"/>
</dbReference>
<dbReference type="FunFam" id="3.40.50.10490:FF:000014">
    <property type="entry name" value="N-acetylmuramic acid 6-phosphate etherase"/>
    <property type="match status" value="1"/>
</dbReference>
<dbReference type="Gene3D" id="1.10.8.1080">
    <property type="match status" value="1"/>
</dbReference>
<dbReference type="Gene3D" id="3.40.50.10490">
    <property type="entry name" value="Glucose-6-phosphate isomerase like protein, domain 1"/>
    <property type="match status" value="1"/>
</dbReference>
<dbReference type="HAMAP" id="MF_00068">
    <property type="entry name" value="MurQ"/>
    <property type="match status" value="1"/>
</dbReference>
<dbReference type="InterPro" id="IPR005488">
    <property type="entry name" value="Etherase_MurQ"/>
</dbReference>
<dbReference type="InterPro" id="IPR005486">
    <property type="entry name" value="Glucokinase_regulatory_CS"/>
</dbReference>
<dbReference type="InterPro" id="IPR040190">
    <property type="entry name" value="MURQ/GCKR"/>
</dbReference>
<dbReference type="InterPro" id="IPR001347">
    <property type="entry name" value="SIS_dom"/>
</dbReference>
<dbReference type="InterPro" id="IPR046348">
    <property type="entry name" value="SIS_dom_sf"/>
</dbReference>
<dbReference type="NCBIfam" id="TIGR00274">
    <property type="entry name" value="N-acetylmuramic acid 6-phosphate etherase"/>
    <property type="match status" value="1"/>
</dbReference>
<dbReference type="NCBIfam" id="NF003915">
    <property type="entry name" value="PRK05441.1"/>
    <property type="match status" value="1"/>
</dbReference>
<dbReference type="NCBIfam" id="NF009222">
    <property type="entry name" value="PRK12570.1"/>
    <property type="match status" value="1"/>
</dbReference>
<dbReference type="PANTHER" id="PTHR10088">
    <property type="entry name" value="GLUCOKINASE REGULATORY PROTEIN"/>
    <property type="match status" value="1"/>
</dbReference>
<dbReference type="PANTHER" id="PTHR10088:SF5">
    <property type="entry name" value="N-ACETYLMURAMIC ACID 6-PHOSPHATE ETHERASE"/>
    <property type="match status" value="1"/>
</dbReference>
<dbReference type="Pfam" id="PF20741">
    <property type="entry name" value="GKRP-like_C"/>
    <property type="match status" value="1"/>
</dbReference>
<dbReference type="Pfam" id="PF22645">
    <property type="entry name" value="GKRP_SIS_N"/>
    <property type="match status" value="1"/>
</dbReference>
<dbReference type="SUPFAM" id="SSF53697">
    <property type="entry name" value="SIS domain"/>
    <property type="match status" value="1"/>
</dbReference>
<dbReference type="PROSITE" id="PS01272">
    <property type="entry name" value="GCKR"/>
    <property type="match status" value="1"/>
</dbReference>
<dbReference type="PROSITE" id="PS51464">
    <property type="entry name" value="SIS"/>
    <property type="match status" value="1"/>
</dbReference>
<organism>
    <name type="scientific">Vibrio campbellii (strain ATCC BAA-1116)</name>
    <dbReference type="NCBI Taxonomy" id="2902295"/>
    <lineage>
        <taxon>Bacteria</taxon>
        <taxon>Pseudomonadati</taxon>
        <taxon>Pseudomonadota</taxon>
        <taxon>Gammaproteobacteria</taxon>
        <taxon>Vibrionales</taxon>
        <taxon>Vibrionaceae</taxon>
        <taxon>Vibrio</taxon>
    </lineage>
</organism>
<evidence type="ECO:0000255" key="1">
    <source>
        <dbReference type="HAMAP-Rule" id="MF_00068"/>
    </source>
</evidence>
<comment type="function">
    <text evidence="1">Specifically catalyzes the cleavage of the D-lactyl ether substituent of MurNAc 6-phosphate, producing GlcNAc 6-phosphate and D-lactate. Together with AnmK, is also required for the utilization of anhydro-N-acetylmuramic acid (anhMurNAc) either imported from the medium or derived from its own cell wall murein, and thus plays a role in cell wall recycling.</text>
</comment>
<comment type="catalytic activity">
    <reaction evidence="1">
        <text>N-acetyl-D-muramate 6-phosphate + H2O = N-acetyl-D-glucosamine 6-phosphate + (R)-lactate</text>
        <dbReference type="Rhea" id="RHEA:26410"/>
        <dbReference type="ChEBI" id="CHEBI:15377"/>
        <dbReference type="ChEBI" id="CHEBI:16004"/>
        <dbReference type="ChEBI" id="CHEBI:57513"/>
        <dbReference type="ChEBI" id="CHEBI:58722"/>
        <dbReference type="EC" id="4.2.1.126"/>
    </reaction>
</comment>
<comment type="pathway">
    <text evidence="1">Amino-sugar metabolism; 1,6-anhydro-N-acetylmuramate degradation.</text>
</comment>
<comment type="pathway">
    <text evidence="1">Amino-sugar metabolism; N-acetylmuramate degradation.</text>
</comment>
<comment type="pathway">
    <text evidence="1">Cell wall biogenesis; peptidoglycan recycling.</text>
</comment>
<comment type="subunit">
    <text evidence="1">Homodimer.</text>
</comment>
<comment type="miscellaneous">
    <text evidence="1">A lyase-type mechanism (elimination/hydration) is suggested for the cleavage of the lactyl ether bond of MurNAc 6-phosphate, with the formation of an alpha,beta-unsaturated aldehyde intermediate with (E)-stereochemistry, followed by the syn addition of water to give product.</text>
</comment>
<comment type="similarity">
    <text evidence="1">Belongs to the GCKR-like family. MurNAc-6-P etherase subfamily.</text>
</comment>